<evidence type="ECO:0000250" key="1"/>
<evidence type="ECO:0000255" key="2"/>
<evidence type="ECO:0000255" key="3">
    <source>
        <dbReference type="PROSITE-ProRule" id="PRU00279"/>
    </source>
</evidence>
<evidence type="ECO:0000269" key="4">
    <source>
    </source>
</evidence>
<evidence type="ECO:0000305" key="5"/>
<keyword id="KW-0249">Electron transport</keyword>
<keyword id="KW-0256">Endoplasmic reticulum</keyword>
<keyword id="KW-0349">Heme</keyword>
<keyword id="KW-0408">Iron</keyword>
<keyword id="KW-0472">Membrane</keyword>
<keyword id="KW-0479">Metal-binding</keyword>
<keyword id="KW-0492">Microsome</keyword>
<keyword id="KW-1185">Reference proteome</keyword>
<keyword id="KW-0812">Transmembrane</keyword>
<keyword id="KW-1133">Transmembrane helix</keyword>
<keyword id="KW-0813">Transport</keyword>
<comment type="function">
    <text>Membrane bound hemoprotein which function as an electron carrier for several membrane bound oxygenases. It plays a role in fatty-acid desaturation and is also involved in several steps of the sterol biosynthesis pathway, particularly in the 4-demethylation of the 4,4'-dimethyl zymosterol.</text>
</comment>
<comment type="subcellular location">
    <subcellularLocation>
        <location evidence="1">Endoplasmic reticulum membrane</location>
        <topology evidence="1">Single-pass membrane protein</topology>
        <orientation evidence="1">Cytoplasmic side</orientation>
    </subcellularLocation>
    <subcellularLocation>
        <location evidence="1">Microsome membrane</location>
        <topology evidence="1">Single-pass membrane protein</topology>
        <orientation evidence="1">Cytoplasmic side</orientation>
    </subcellularLocation>
</comment>
<comment type="miscellaneous">
    <text evidence="4">Present with 5390 molecules/cell in log phase SD medium.</text>
</comment>
<comment type="similarity">
    <text evidence="5">Belongs to the cytochrome b5 family.</text>
</comment>
<organism>
    <name type="scientific">Saccharomyces cerevisiae (strain ATCC 204508 / S288c)</name>
    <name type="common">Baker's yeast</name>
    <dbReference type="NCBI Taxonomy" id="559292"/>
    <lineage>
        <taxon>Eukaryota</taxon>
        <taxon>Fungi</taxon>
        <taxon>Dikarya</taxon>
        <taxon>Ascomycota</taxon>
        <taxon>Saccharomycotina</taxon>
        <taxon>Saccharomycetes</taxon>
        <taxon>Saccharomycetales</taxon>
        <taxon>Saccharomycetaceae</taxon>
        <taxon>Saccharomyces</taxon>
    </lineage>
</organism>
<dbReference type="EMBL" id="L22494">
    <property type="protein sequence ID" value="AAA67468.1"/>
    <property type="molecule type" value="Genomic_DNA"/>
</dbReference>
<dbReference type="EMBL" id="Z69382">
    <property type="protein sequence ID" value="CAA93396.1"/>
    <property type="molecule type" value="Genomic_DNA"/>
</dbReference>
<dbReference type="EMBL" id="Z71387">
    <property type="protein sequence ID" value="CAA95990.1"/>
    <property type="molecule type" value="Genomic_DNA"/>
</dbReference>
<dbReference type="EMBL" id="AY693106">
    <property type="protein sequence ID" value="AAT93125.1"/>
    <property type="molecule type" value="Genomic_DNA"/>
</dbReference>
<dbReference type="EMBL" id="BK006947">
    <property type="protein sequence ID" value="DAA10436.1"/>
    <property type="molecule type" value="Genomic_DNA"/>
</dbReference>
<dbReference type="PIR" id="S63052">
    <property type="entry name" value="S63052"/>
</dbReference>
<dbReference type="RefSeq" id="NP_014288.3">
    <property type="nucleotide sequence ID" value="NM_001182949.3"/>
</dbReference>
<dbReference type="SMR" id="P40312"/>
<dbReference type="BioGRID" id="35714">
    <property type="interactions" value="176"/>
</dbReference>
<dbReference type="FunCoup" id="P40312">
    <property type="interactions" value="903"/>
</dbReference>
<dbReference type="IntAct" id="P40312">
    <property type="interactions" value="9"/>
</dbReference>
<dbReference type="MINT" id="P40312"/>
<dbReference type="STRING" id="4932.YNL111C"/>
<dbReference type="iPTMnet" id="P40312"/>
<dbReference type="PaxDb" id="4932-YNL111C"/>
<dbReference type="PeptideAtlas" id="P40312"/>
<dbReference type="TopDownProteomics" id="P40312"/>
<dbReference type="EnsemblFungi" id="YNL111C_mRNA">
    <property type="protein sequence ID" value="YNL111C"/>
    <property type="gene ID" value="YNL111C"/>
</dbReference>
<dbReference type="GeneID" id="855612"/>
<dbReference type="KEGG" id="sce:YNL111C"/>
<dbReference type="AGR" id="SGD:S000005055"/>
<dbReference type="SGD" id="S000005055">
    <property type="gene designation" value="CYB5"/>
</dbReference>
<dbReference type="VEuPathDB" id="FungiDB:YNL111C"/>
<dbReference type="eggNOG" id="KOG0537">
    <property type="taxonomic scope" value="Eukaryota"/>
</dbReference>
<dbReference type="HOGENOM" id="CLU_102602_3_2_1"/>
<dbReference type="InParanoid" id="P40312"/>
<dbReference type="OMA" id="WIVIHND"/>
<dbReference type="OrthoDB" id="260519at2759"/>
<dbReference type="BioCyc" id="YEAST:G3O-33135-MONOMER"/>
<dbReference type="Reactome" id="R-SCE-1660661">
    <property type="pathway name" value="Sphingolipid de novo biosynthesis"/>
</dbReference>
<dbReference type="Reactome" id="R-SCE-196836">
    <property type="pathway name" value="Vitamin C (ascorbate) metabolism"/>
</dbReference>
<dbReference type="Reactome" id="R-SCE-9609523">
    <property type="pathway name" value="Insertion of tail-anchored proteins into the endoplasmic reticulum membrane"/>
</dbReference>
<dbReference type="SABIO-RK" id="P40312"/>
<dbReference type="BioGRID-ORCS" id="855612">
    <property type="hits" value="0 hits in 10 CRISPR screens"/>
</dbReference>
<dbReference type="PRO" id="PR:P40312"/>
<dbReference type="Proteomes" id="UP000002311">
    <property type="component" value="Chromosome XIV"/>
</dbReference>
<dbReference type="RNAct" id="P40312">
    <property type="molecule type" value="protein"/>
</dbReference>
<dbReference type="GO" id="GO:0005783">
    <property type="term" value="C:endoplasmic reticulum"/>
    <property type="evidence" value="ECO:0007005"/>
    <property type="project" value="SGD"/>
</dbReference>
<dbReference type="GO" id="GO:0005789">
    <property type="term" value="C:endoplasmic reticulum membrane"/>
    <property type="evidence" value="ECO:0000314"/>
    <property type="project" value="SGD"/>
</dbReference>
<dbReference type="GO" id="GO:0043231">
    <property type="term" value="C:intracellular membrane-bounded organelle"/>
    <property type="evidence" value="ECO:0000318"/>
    <property type="project" value="GO_Central"/>
</dbReference>
<dbReference type="GO" id="GO:0009055">
    <property type="term" value="F:electron transfer activity"/>
    <property type="evidence" value="ECO:0000314"/>
    <property type="project" value="SGD"/>
</dbReference>
<dbReference type="GO" id="GO:0020037">
    <property type="term" value="F:heme binding"/>
    <property type="evidence" value="ECO:0000318"/>
    <property type="project" value="GO_Central"/>
</dbReference>
<dbReference type="GO" id="GO:0046872">
    <property type="term" value="F:metal ion binding"/>
    <property type="evidence" value="ECO:0007669"/>
    <property type="project" value="UniProtKB-KW"/>
</dbReference>
<dbReference type="GO" id="GO:0016126">
    <property type="term" value="P:sterol biosynthetic process"/>
    <property type="evidence" value="ECO:0000314"/>
    <property type="project" value="SGD"/>
</dbReference>
<dbReference type="FunFam" id="3.10.120.10:FF:000002">
    <property type="entry name" value="Cytochrome b5 type B"/>
    <property type="match status" value="1"/>
</dbReference>
<dbReference type="Gene3D" id="3.10.120.10">
    <property type="entry name" value="Cytochrome b5-like heme/steroid binding domain"/>
    <property type="match status" value="1"/>
</dbReference>
<dbReference type="InterPro" id="IPR001199">
    <property type="entry name" value="Cyt_B5-like_heme/steroid-bd"/>
</dbReference>
<dbReference type="InterPro" id="IPR036400">
    <property type="entry name" value="Cyt_B5-like_heme/steroid_sf"/>
</dbReference>
<dbReference type="InterPro" id="IPR018506">
    <property type="entry name" value="Cyt_B5_heme-BS"/>
</dbReference>
<dbReference type="InterPro" id="IPR050668">
    <property type="entry name" value="Cytochrome_b5"/>
</dbReference>
<dbReference type="PANTHER" id="PTHR19359">
    <property type="entry name" value="CYTOCHROME B5"/>
    <property type="match status" value="1"/>
</dbReference>
<dbReference type="PANTHER" id="PTHR19359:SF150">
    <property type="entry name" value="CYTOCHROME B5"/>
    <property type="match status" value="1"/>
</dbReference>
<dbReference type="Pfam" id="PF00173">
    <property type="entry name" value="Cyt-b5"/>
    <property type="match status" value="1"/>
</dbReference>
<dbReference type="PRINTS" id="PR00363">
    <property type="entry name" value="CYTOCHROMEB5"/>
</dbReference>
<dbReference type="SMART" id="SM01117">
    <property type="entry name" value="Cyt-b5"/>
    <property type="match status" value="1"/>
</dbReference>
<dbReference type="SUPFAM" id="SSF55856">
    <property type="entry name" value="Cytochrome b5-like heme/steroid binding domain"/>
    <property type="match status" value="1"/>
</dbReference>
<dbReference type="PROSITE" id="PS00191">
    <property type="entry name" value="CYTOCHROME_B5_1"/>
    <property type="match status" value="1"/>
</dbReference>
<dbReference type="PROSITE" id="PS50255">
    <property type="entry name" value="CYTOCHROME_B5_2"/>
    <property type="match status" value="1"/>
</dbReference>
<reference key="1">
    <citation type="journal article" date="1994" name="Gene">
        <title>Cloning and characterization of a yeast cytochrome b5-encoding gene which suppresses ketoconazole hypersensitivity in a NADPH-P-450 reductase-deficient strain.</title>
        <authorList>
            <person name="Truan G."/>
            <person name="Epinat J.-C."/>
            <person name="Rougeulle C."/>
            <person name="Cullin C."/>
            <person name="Pompon D."/>
        </authorList>
    </citation>
    <scope>NUCLEOTIDE SEQUENCE [GENOMIC DNA]</scope>
    <source>
        <strain>ATCC 28383 / FL100 / VTT C-80102</strain>
    </source>
</reference>
<reference key="2">
    <citation type="journal article" date="1997" name="Yeast">
        <title>The DNA sequence of cosmid 14-13b from chromosome XIV of Saccharomyces cerevisiae reveals an unusually high number of overlapping open reading frames.</title>
        <authorList>
            <person name="de Antoni A."/>
            <person name="D'Angelo M."/>
            <person name="Dal Pero F."/>
            <person name="Sartorello F."/>
            <person name="Pandolfo D."/>
            <person name="Pallavicini A."/>
            <person name="Lanfranchi G."/>
            <person name="Valle G."/>
        </authorList>
    </citation>
    <scope>NUCLEOTIDE SEQUENCE [GENOMIC DNA]</scope>
</reference>
<reference key="3">
    <citation type="journal article" date="1997" name="Nature">
        <title>The nucleotide sequence of Saccharomyces cerevisiae chromosome XIV and its evolutionary implications.</title>
        <authorList>
            <person name="Philippsen P."/>
            <person name="Kleine K."/>
            <person name="Poehlmann R."/>
            <person name="Duesterhoeft A."/>
            <person name="Hamberg K."/>
            <person name="Hegemann J.H."/>
            <person name="Obermaier B."/>
            <person name="Urrestarazu L.A."/>
            <person name="Aert R."/>
            <person name="Albermann K."/>
            <person name="Altmann R."/>
            <person name="Andre B."/>
            <person name="Baladron V."/>
            <person name="Ballesta J.P.G."/>
            <person name="Becam A.-M."/>
            <person name="Beinhauer J.D."/>
            <person name="Boskovic J."/>
            <person name="Buitrago M.J."/>
            <person name="Bussereau F."/>
            <person name="Coster F."/>
            <person name="Crouzet M."/>
            <person name="D'Angelo M."/>
            <person name="Dal Pero F."/>
            <person name="De Antoni A."/>
            <person name="del Rey F."/>
            <person name="Doignon F."/>
            <person name="Domdey H."/>
            <person name="Dubois E."/>
            <person name="Fiedler T.A."/>
            <person name="Fleig U."/>
            <person name="Floeth M."/>
            <person name="Fritz C."/>
            <person name="Gaillardin C."/>
            <person name="Garcia-Cantalejo J.M."/>
            <person name="Glansdorff N."/>
            <person name="Goffeau A."/>
            <person name="Gueldener U."/>
            <person name="Herbert C.J."/>
            <person name="Heumann K."/>
            <person name="Heuss-Neitzel D."/>
            <person name="Hilbert H."/>
            <person name="Hinni K."/>
            <person name="Iraqui Houssaini I."/>
            <person name="Jacquet M."/>
            <person name="Jimenez A."/>
            <person name="Jonniaux J.-L."/>
            <person name="Karpfinger-Hartl L."/>
            <person name="Lanfranchi G."/>
            <person name="Lepingle A."/>
            <person name="Levesque H."/>
            <person name="Lyck R."/>
            <person name="Maftahi M."/>
            <person name="Mallet L."/>
            <person name="Maurer C.T.C."/>
            <person name="Messenguy F."/>
            <person name="Mewes H.-W."/>
            <person name="Moestl D."/>
            <person name="Nasr F."/>
            <person name="Nicaud J.-M."/>
            <person name="Niedenthal R.K."/>
            <person name="Pandolfo D."/>
            <person name="Pierard A."/>
            <person name="Piravandi E."/>
            <person name="Planta R.J."/>
            <person name="Pohl T.M."/>
            <person name="Purnelle B."/>
            <person name="Rebischung C."/>
            <person name="Remacha M.A."/>
            <person name="Revuelta J.L."/>
            <person name="Rinke M."/>
            <person name="Saiz J.E."/>
            <person name="Sartorello F."/>
            <person name="Scherens B."/>
            <person name="Sen-Gupta M."/>
            <person name="Soler-Mira A."/>
            <person name="Urbanus J.H.M."/>
            <person name="Valle G."/>
            <person name="Van Dyck L."/>
            <person name="Verhasselt P."/>
            <person name="Vierendeels F."/>
            <person name="Vissers S."/>
            <person name="Voet M."/>
            <person name="Volckaert G."/>
            <person name="Wach A."/>
            <person name="Wambutt R."/>
            <person name="Wedler H."/>
            <person name="Zollner A."/>
            <person name="Hani J."/>
        </authorList>
    </citation>
    <scope>NUCLEOTIDE SEQUENCE [LARGE SCALE GENOMIC DNA]</scope>
    <source>
        <strain>ATCC 204508 / S288c</strain>
    </source>
</reference>
<reference key="4">
    <citation type="journal article" date="2014" name="G3 (Bethesda)">
        <title>The reference genome sequence of Saccharomyces cerevisiae: Then and now.</title>
        <authorList>
            <person name="Engel S.R."/>
            <person name="Dietrich F.S."/>
            <person name="Fisk D.G."/>
            <person name="Binkley G."/>
            <person name="Balakrishnan R."/>
            <person name="Costanzo M.C."/>
            <person name="Dwight S.S."/>
            <person name="Hitz B.C."/>
            <person name="Karra K."/>
            <person name="Nash R.S."/>
            <person name="Weng S."/>
            <person name="Wong E.D."/>
            <person name="Lloyd P."/>
            <person name="Skrzypek M.S."/>
            <person name="Miyasato S.R."/>
            <person name="Simison M."/>
            <person name="Cherry J.M."/>
        </authorList>
    </citation>
    <scope>GENOME REANNOTATION</scope>
    <source>
        <strain>ATCC 204508 / S288c</strain>
    </source>
</reference>
<reference key="5">
    <citation type="journal article" date="2007" name="Genome Res.">
        <title>Approaching a complete repository of sequence-verified protein-encoding clones for Saccharomyces cerevisiae.</title>
        <authorList>
            <person name="Hu Y."/>
            <person name="Rolfs A."/>
            <person name="Bhullar B."/>
            <person name="Murthy T.V.S."/>
            <person name="Zhu C."/>
            <person name="Berger M.F."/>
            <person name="Camargo A.A."/>
            <person name="Kelley F."/>
            <person name="McCarron S."/>
            <person name="Jepson D."/>
            <person name="Richardson A."/>
            <person name="Raphael J."/>
            <person name="Moreira D."/>
            <person name="Taycher E."/>
            <person name="Zuo D."/>
            <person name="Mohr S."/>
            <person name="Kane M.F."/>
            <person name="Williamson J."/>
            <person name="Simpson A.J.G."/>
            <person name="Bulyk M.L."/>
            <person name="Harlow E."/>
            <person name="Marsischky G."/>
            <person name="Kolodner R.D."/>
            <person name="LaBaer J."/>
        </authorList>
    </citation>
    <scope>NUCLEOTIDE SEQUENCE [GENOMIC DNA]</scope>
    <source>
        <strain>ATCC 204508 / S288c</strain>
    </source>
</reference>
<reference key="6">
    <citation type="journal article" date="2003" name="Nature">
        <title>Global analysis of protein expression in yeast.</title>
        <authorList>
            <person name="Ghaemmaghami S."/>
            <person name="Huh W.-K."/>
            <person name="Bower K."/>
            <person name="Howson R.W."/>
            <person name="Belle A."/>
            <person name="Dephoure N."/>
            <person name="O'Shea E.K."/>
            <person name="Weissman J.S."/>
        </authorList>
    </citation>
    <scope>LEVEL OF PROTEIN EXPRESSION [LARGE SCALE ANALYSIS]</scope>
</reference>
<proteinExistence type="evidence at protein level"/>
<accession>P40312</accession>
<accession>D6W170</accession>
<feature type="chain" id="PRO_0000166035" description="Cytochrome b5">
    <location>
        <begin position="1"/>
        <end position="120"/>
    </location>
</feature>
<feature type="transmembrane region" description="Helical" evidence="2">
    <location>
        <begin position="98"/>
        <end position="118"/>
    </location>
</feature>
<feature type="domain" description="Cytochrome b5 heme-binding" evidence="3">
    <location>
        <begin position="2"/>
        <end position="78"/>
    </location>
</feature>
<feature type="binding site" description="axial binding residue" evidence="3">
    <location>
        <position position="37"/>
    </location>
    <ligand>
        <name>heme</name>
        <dbReference type="ChEBI" id="CHEBI:30413"/>
    </ligand>
    <ligandPart>
        <name>Fe</name>
        <dbReference type="ChEBI" id="CHEBI:18248"/>
    </ligandPart>
</feature>
<feature type="binding site" description="axial binding residue" evidence="3">
    <location>
        <position position="61"/>
    </location>
    <ligand>
        <name>heme</name>
        <dbReference type="ChEBI" id="CHEBI:30413"/>
    </ligand>
    <ligandPart>
        <name>Fe</name>
        <dbReference type="ChEBI" id="CHEBI:18248"/>
    </ligandPart>
</feature>
<feature type="sequence conflict" description="In Ref. 1; AAA67468." evidence="5" ref="1">
    <original>E</original>
    <variation>Q</variation>
    <location>
        <position position="17"/>
    </location>
</feature>
<sequence length="120" mass="13297">MPKVYSYQEVAEHNGPENFWIIIDDKVYDVSQFKDEHPGGDEIIMDLGGQDATESFVDIGHSDEALRLLKGLYIGDVDKTSERVSVEKVSTSENQSKGSGTLVVILAILMLGVAYYLLNE</sequence>
<protein>
    <recommendedName>
        <fullName>Cytochrome b5</fullName>
    </recommendedName>
</protein>
<name>CYB5_YEAST</name>
<gene>
    <name type="primary">CYB5</name>
    <name type="ordered locus">YNL111C</name>
    <name type="ORF">N1949</name>
</gene>